<comment type="function">
    <text evidence="1">Required for maturation of 30S ribosomal subunits.</text>
</comment>
<comment type="subcellular location">
    <subcellularLocation>
        <location evidence="1">Cytoplasm</location>
    </subcellularLocation>
</comment>
<comment type="similarity">
    <text evidence="1">Belongs to the RimP family.</text>
</comment>
<accession>A7MUV0</accession>
<dbReference type="EMBL" id="CP000789">
    <property type="protein sequence ID" value="ABU72345.1"/>
    <property type="molecule type" value="Genomic_DNA"/>
</dbReference>
<dbReference type="RefSeq" id="WP_005530330.1">
    <property type="nucleotide sequence ID" value="NC_022269.1"/>
</dbReference>
<dbReference type="SMR" id="A7MUV0"/>
<dbReference type="GeneID" id="67376382"/>
<dbReference type="KEGG" id="vha:VIBHAR_03398"/>
<dbReference type="PATRIC" id="fig|338187.25.peg.2798"/>
<dbReference type="Proteomes" id="UP000008152">
    <property type="component" value="Chromosome I"/>
</dbReference>
<dbReference type="GO" id="GO:0005829">
    <property type="term" value="C:cytosol"/>
    <property type="evidence" value="ECO:0007669"/>
    <property type="project" value="TreeGrafter"/>
</dbReference>
<dbReference type="GO" id="GO:0000028">
    <property type="term" value="P:ribosomal small subunit assembly"/>
    <property type="evidence" value="ECO:0007669"/>
    <property type="project" value="TreeGrafter"/>
</dbReference>
<dbReference type="GO" id="GO:0006412">
    <property type="term" value="P:translation"/>
    <property type="evidence" value="ECO:0007669"/>
    <property type="project" value="TreeGrafter"/>
</dbReference>
<dbReference type="CDD" id="cd01734">
    <property type="entry name" value="YlxS_C"/>
    <property type="match status" value="1"/>
</dbReference>
<dbReference type="FunFam" id="2.30.30.180:FF:000001">
    <property type="entry name" value="Ribosome maturation factor RimP"/>
    <property type="match status" value="1"/>
</dbReference>
<dbReference type="FunFam" id="3.30.300.70:FF:000001">
    <property type="entry name" value="Ribosome maturation factor RimP"/>
    <property type="match status" value="1"/>
</dbReference>
<dbReference type="Gene3D" id="2.30.30.180">
    <property type="entry name" value="Ribosome maturation factor RimP, C-terminal domain"/>
    <property type="match status" value="1"/>
</dbReference>
<dbReference type="Gene3D" id="3.30.300.70">
    <property type="entry name" value="RimP-like superfamily, N-terminal"/>
    <property type="match status" value="1"/>
</dbReference>
<dbReference type="HAMAP" id="MF_01077">
    <property type="entry name" value="RimP"/>
    <property type="match status" value="1"/>
</dbReference>
<dbReference type="InterPro" id="IPR003728">
    <property type="entry name" value="Ribosome_maturation_RimP"/>
</dbReference>
<dbReference type="InterPro" id="IPR028998">
    <property type="entry name" value="RimP_C"/>
</dbReference>
<dbReference type="InterPro" id="IPR036847">
    <property type="entry name" value="RimP_C_sf"/>
</dbReference>
<dbReference type="InterPro" id="IPR028989">
    <property type="entry name" value="RimP_N"/>
</dbReference>
<dbReference type="InterPro" id="IPR035956">
    <property type="entry name" value="RimP_N_sf"/>
</dbReference>
<dbReference type="NCBIfam" id="NF000927">
    <property type="entry name" value="PRK00092.1-1"/>
    <property type="match status" value="1"/>
</dbReference>
<dbReference type="PANTHER" id="PTHR33867">
    <property type="entry name" value="RIBOSOME MATURATION FACTOR RIMP"/>
    <property type="match status" value="1"/>
</dbReference>
<dbReference type="PANTHER" id="PTHR33867:SF1">
    <property type="entry name" value="RIBOSOME MATURATION FACTOR RIMP"/>
    <property type="match status" value="1"/>
</dbReference>
<dbReference type="Pfam" id="PF17384">
    <property type="entry name" value="DUF150_C"/>
    <property type="match status" value="1"/>
</dbReference>
<dbReference type="Pfam" id="PF02576">
    <property type="entry name" value="RimP_N"/>
    <property type="match status" value="1"/>
</dbReference>
<dbReference type="SUPFAM" id="SSF74942">
    <property type="entry name" value="YhbC-like, C-terminal domain"/>
    <property type="match status" value="1"/>
</dbReference>
<dbReference type="SUPFAM" id="SSF75420">
    <property type="entry name" value="YhbC-like, N-terminal domain"/>
    <property type="match status" value="1"/>
</dbReference>
<sequence>MTGLERQLTEMLEAPVEATGYELVGLEFIRAGAHSTLRIYIDHENGINVDACAEVSHQVSAVLDVEDPISVAYSLEVSSPGLERPLFKAAHYEQFIGHEVSIVLKMAVANRRKWKGIIHSVDGETIAVTCEGQQEEFALSNISKANLIPKF</sequence>
<feature type="chain" id="PRO_1000064796" description="Ribosome maturation factor RimP">
    <location>
        <begin position="1"/>
        <end position="151"/>
    </location>
</feature>
<proteinExistence type="inferred from homology"/>
<reference key="1">
    <citation type="submission" date="2007-08" db="EMBL/GenBank/DDBJ databases">
        <authorList>
            <consortium name="The Vibrio harveyi Genome Sequencing Project"/>
            <person name="Bassler B."/>
            <person name="Clifton S.W."/>
            <person name="Fulton L."/>
            <person name="Delehaunty K."/>
            <person name="Fronick C."/>
            <person name="Harrison M."/>
            <person name="Markivic C."/>
            <person name="Fulton R."/>
            <person name="Tin-Wollam A.-M."/>
            <person name="Shah N."/>
            <person name="Pepin K."/>
            <person name="Nash W."/>
            <person name="Thiruvilangam P."/>
            <person name="Bhonagiri V."/>
            <person name="Waters C."/>
            <person name="Tu K.C."/>
            <person name="Irgon J."/>
            <person name="Wilson R.K."/>
        </authorList>
    </citation>
    <scope>NUCLEOTIDE SEQUENCE [LARGE SCALE GENOMIC DNA]</scope>
    <source>
        <strain>ATCC BAA-1116 / BB120</strain>
    </source>
</reference>
<protein>
    <recommendedName>
        <fullName evidence="1">Ribosome maturation factor RimP</fullName>
    </recommendedName>
</protein>
<keyword id="KW-0963">Cytoplasm</keyword>
<keyword id="KW-0690">Ribosome biogenesis</keyword>
<evidence type="ECO:0000255" key="1">
    <source>
        <dbReference type="HAMAP-Rule" id="MF_01077"/>
    </source>
</evidence>
<organism>
    <name type="scientific">Vibrio campbellii (strain ATCC BAA-1116)</name>
    <dbReference type="NCBI Taxonomy" id="2902295"/>
    <lineage>
        <taxon>Bacteria</taxon>
        <taxon>Pseudomonadati</taxon>
        <taxon>Pseudomonadota</taxon>
        <taxon>Gammaproteobacteria</taxon>
        <taxon>Vibrionales</taxon>
        <taxon>Vibrionaceae</taxon>
        <taxon>Vibrio</taxon>
    </lineage>
</organism>
<gene>
    <name evidence="1" type="primary">rimP</name>
    <name type="ordered locus">VIBHAR_03398</name>
</gene>
<name>RIMP_VIBC1</name>